<sequence>MSEVKQYEGREYDVIVVGAGHAGSEAALAAARMGNKTLLMTINLDMVAFMPCNPSIGGPAKGIVVREIDALGGEMGRNIDKTYVQMRMLNTGKGPAVRALRAQADKHAYHAEMKKTIEAEPNLTLRQGIVDDLIVEDGVCKGVITNTGARYQAKSVVLTLGTAARGKIIIGELQYSSGPNNSQAALELTKNLTEKYHFDLERFKTGTPPRVDGGTINYDETEEQPGDEVPNHFSFQTPDSKYIELKNQLSCWLTYTNEKTHEIIRENLDRAPMFSGMIEGVGPRYCPSIEDKIVRFADKSRHQLFLEPEGRKTDEWYVQGLSTSMPEEVQQQILHSIKGLEEAEMMRPGYAIEYDVVAPYQLKNTLETKLVKNLYTAGQTNGTSGYEEAAGQGLIAGINAGRRALGKEPLTLKRSDAYIGVMIDDLVTKGTKEPYRLLTSRAEYRLILRHDNADLRLTEVGHNLGLVSDEEYNAFLEKKQDIKDELQRLSEIRIKPSQVQKFLESKGSNGLKDGVLASEFLRRPEVNYSDLLKFIDAPEKDLDRRVIEQVEIETKYAGYIKKAQDRVDRLKRMEEKAIPDRIDYEAINGLATEGRQKLEKIRPTTIAQASRISGVTPADIAILSVYIQQGKIAKIAE</sequence>
<proteinExistence type="inferred from homology"/>
<reference key="1">
    <citation type="journal article" date="2006" name="Proc. Natl. Acad. Sci. U.S.A.">
        <title>Comparative genomics of the lactic acid bacteria.</title>
        <authorList>
            <person name="Makarova K.S."/>
            <person name="Slesarev A."/>
            <person name="Wolf Y.I."/>
            <person name="Sorokin A."/>
            <person name="Mirkin B."/>
            <person name="Koonin E.V."/>
            <person name="Pavlov A."/>
            <person name="Pavlova N."/>
            <person name="Karamychev V."/>
            <person name="Polouchine N."/>
            <person name="Shakhova V."/>
            <person name="Grigoriev I."/>
            <person name="Lou Y."/>
            <person name="Rohksar D."/>
            <person name="Lucas S."/>
            <person name="Huang K."/>
            <person name="Goodstein D.M."/>
            <person name="Hawkins T."/>
            <person name="Plengvidhya V."/>
            <person name="Welker D."/>
            <person name="Hughes J."/>
            <person name="Goh Y."/>
            <person name="Benson A."/>
            <person name="Baldwin K."/>
            <person name="Lee J.-H."/>
            <person name="Diaz-Muniz I."/>
            <person name="Dosti B."/>
            <person name="Smeianov V."/>
            <person name="Wechter W."/>
            <person name="Barabote R."/>
            <person name="Lorca G."/>
            <person name="Altermann E."/>
            <person name="Barrangou R."/>
            <person name="Ganesan B."/>
            <person name="Xie Y."/>
            <person name="Rawsthorne H."/>
            <person name="Tamir D."/>
            <person name="Parker C."/>
            <person name="Breidt F."/>
            <person name="Broadbent J.R."/>
            <person name="Hutkins R."/>
            <person name="O'Sullivan D."/>
            <person name="Steele J."/>
            <person name="Unlu G."/>
            <person name="Saier M.H. Jr."/>
            <person name="Klaenhammer T."/>
            <person name="Richardson P."/>
            <person name="Kozyavkin S."/>
            <person name="Weimer B.C."/>
            <person name="Mills D.A."/>
        </authorList>
    </citation>
    <scope>NUCLEOTIDE SEQUENCE [LARGE SCALE GENOMIC DNA]</scope>
    <source>
        <strain>ATCC 25745 / CCUG 21536 / LMG 10740 / 183-1w</strain>
    </source>
</reference>
<evidence type="ECO:0000255" key="1">
    <source>
        <dbReference type="HAMAP-Rule" id="MF_00129"/>
    </source>
</evidence>
<organism>
    <name type="scientific">Pediococcus pentosaceus (strain ATCC 25745 / CCUG 21536 / LMG 10740 / 183-1w)</name>
    <dbReference type="NCBI Taxonomy" id="278197"/>
    <lineage>
        <taxon>Bacteria</taxon>
        <taxon>Bacillati</taxon>
        <taxon>Bacillota</taxon>
        <taxon>Bacilli</taxon>
        <taxon>Lactobacillales</taxon>
        <taxon>Lactobacillaceae</taxon>
        <taxon>Pediococcus</taxon>
    </lineage>
</organism>
<comment type="function">
    <text evidence="1">NAD-binding protein involved in the addition of a carboxymethylaminomethyl (cmnm) group at the wobble position (U34) of certain tRNAs, forming tRNA-cmnm(5)s(2)U34.</text>
</comment>
<comment type="cofactor">
    <cofactor evidence="1">
        <name>FAD</name>
        <dbReference type="ChEBI" id="CHEBI:57692"/>
    </cofactor>
</comment>
<comment type="subunit">
    <text evidence="1">Homodimer. Heterotetramer of two MnmE and two MnmG subunits.</text>
</comment>
<comment type="subcellular location">
    <subcellularLocation>
        <location evidence="1">Cytoplasm</location>
    </subcellularLocation>
</comment>
<comment type="similarity">
    <text evidence="1">Belongs to the MnmG family.</text>
</comment>
<name>MNMG_PEDPA</name>
<accession>Q03D60</accession>
<gene>
    <name evidence="1" type="primary">mnmG</name>
    <name evidence="1" type="synonym">gidA</name>
    <name type="ordered locus">PEPE_1843</name>
</gene>
<dbReference type="EMBL" id="CP000422">
    <property type="protein sequence ID" value="ABJ68862.1"/>
    <property type="molecule type" value="Genomic_DNA"/>
</dbReference>
<dbReference type="RefSeq" id="WP_011673924.1">
    <property type="nucleotide sequence ID" value="NC_008525.1"/>
</dbReference>
<dbReference type="SMR" id="Q03D60"/>
<dbReference type="STRING" id="278197.PEPE_1843"/>
<dbReference type="GeneID" id="33062041"/>
<dbReference type="KEGG" id="ppe:PEPE_1843"/>
<dbReference type="eggNOG" id="COG0445">
    <property type="taxonomic scope" value="Bacteria"/>
</dbReference>
<dbReference type="HOGENOM" id="CLU_007831_2_2_9"/>
<dbReference type="OrthoDB" id="9815560at2"/>
<dbReference type="Proteomes" id="UP000000773">
    <property type="component" value="Chromosome"/>
</dbReference>
<dbReference type="GO" id="GO:0005829">
    <property type="term" value="C:cytosol"/>
    <property type="evidence" value="ECO:0007669"/>
    <property type="project" value="TreeGrafter"/>
</dbReference>
<dbReference type="GO" id="GO:0050660">
    <property type="term" value="F:flavin adenine dinucleotide binding"/>
    <property type="evidence" value="ECO:0007669"/>
    <property type="project" value="UniProtKB-UniRule"/>
</dbReference>
<dbReference type="GO" id="GO:0030488">
    <property type="term" value="P:tRNA methylation"/>
    <property type="evidence" value="ECO:0007669"/>
    <property type="project" value="TreeGrafter"/>
</dbReference>
<dbReference type="GO" id="GO:0002098">
    <property type="term" value="P:tRNA wobble uridine modification"/>
    <property type="evidence" value="ECO:0007669"/>
    <property type="project" value="InterPro"/>
</dbReference>
<dbReference type="FunFam" id="1.10.10.1800:FF:000001">
    <property type="entry name" value="tRNA uridine 5-carboxymethylaminomethyl modification enzyme MnmG"/>
    <property type="match status" value="1"/>
</dbReference>
<dbReference type="FunFam" id="1.10.150.570:FF:000001">
    <property type="entry name" value="tRNA uridine 5-carboxymethylaminomethyl modification enzyme MnmG"/>
    <property type="match status" value="1"/>
</dbReference>
<dbReference type="FunFam" id="3.50.50.60:FF:000002">
    <property type="entry name" value="tRNA uridine 5-carboxymethylaminomethyl modification enzyme MnmG"/>
    <property type="match status" value="1"/>
</dbReference>
<dbReference type="FunFam" id="3.50.50.60:FF:000063">
    <property type="entry name" value="tRNA uridine 5-carboxymethylaminomethyl modification enzyme MnmG"/>
    <property type="match status" value="1"/>
</dbReference>
<dbReference type="Gene3D" id="3.50.50.60">
    <property type="entry name" value="FAD/NAD(P)-binding domain"/>
    <property type="match status" value="2"/>
</dbReference>
<dbReference type="Gene3D" id="1.10.150.570">
    <property type="entry name" value="GidA associated domain, C-terminal subdomain"/>
    <property type="match status" value="1"/>
</dbReference>
<dbReference type="Gene3D" id="1.10.10.1800">
    <property type="entry name" value="tRNA uridine 5-carboxymethylaminomethyl modification enzyme MnmG/GidA"/>
    <property type="match status" value="1"/>
</dbReference>
<dbReference type="HAMAP" id="MF_00129">
    <property type="entry name" value="MnmG_GidA"/>
    <property type="match status" value="1"/>
</dbReference>
<dbReference type="InterPro" id="IPR036188">
    <property type="entry name" value="FAD/NAD-bd_sf"/>
</dbReference>
<dbReference type="InterPro" id="IPR049312">
    <property type="entry name" value="GIDA_C_N"/>
</dbReference>
<dbReference type="InterPro" id="IPR004416">
    <property type="entry name" value="MnmG"/>
</dbReference>
<dbReference type="InterPro" id="IPR002218">
    <property type="entry name" value="MnmG-rel"/>
</dbReference>
<dbReference type="InterPro" id="IPR020595">
    <property type="entry name" value="MnmG-rel_CS"/>
</dbReference>
<dbReference type="InterPro" id="IPR026904">
    <property type="entry name" value="MnmG_C"/>
</dbReference>
<dbReference type="InterPro" id="IPR047001">
    <property type="entry name" value="MnmG_C_subdom"/>
</dbReference>
<dbReference type="InterPro" id="IPR044920">
    <property type="entry name" value="MnmG_C_subdom_sf"/>
</dbReference>
<dbReference type="InterPro" id="IPR040131">
    <property type="entry name" value="MnmG_N"/>
</dbReference>
<dbReference type="NCBIfam" id="TIGR00136">
    <property type="entry name" value="mnmG_gidA"/>
    <property type="match status" value="1"/>
</dbReference>
<dbReference type="PANTHER" id="PTHR11806">
    <property type="entry name" value="GLUCOSE INHIBITED DIVISION PROTEIN A"/>
    <property type="match status" value="1"/>
</dbReference>
<dbReference type="PANTHER" id="PTHR11806:SF0">
    <property type="entry name" value="PROTEIN MTO1 HOMOLOG, MITOCHONDRIAL"/>
    <property type="match status" value="1"/>
</dbReference>
<dbReference type="Pfam" id="PF01134">
    <property type="entry name" value="GIDA"/>
    <property type="match status" value="1"/>
</dbReference>
<dbReference type="Pfam" id="PF21680">
    <property type="entry name" value="GIDA_C_1st"/>
    <property type="match status" value="1"/>
</dbReference>
<dbReference type="Pfam" id="PF13932">
    <property type="entry name" value="SAM_GIDA_C"/>
    <property type="match status" value="1"/>
</dbReference>
<dbReference type="PRINTS" id="PR00368">
    <property type="entry name" value="FADPNR"/>
</dbReference>
<dbReference type="SMART" id="SM01228">
    <property type="entry name" value="GIDA_assoc_3"/>
    <property type="match status" value="1"/>
</dbReference>
<dbReference type="SUPFAM" id="SSF51905">
    <property type="entry name" value="FAD/NAD(P)-binding domain"/>
    <property type="match status" value="1"/>
</dbReference>
<dbReference type="PROSITE" id="PS01280">
    <property type="entry name" value="GIDA_1"/>
    <property type="match status" value="1"/>
</dbReference>
<dbReference type="PROSITE" id="PS01281">
    <property type="entry name" value="GIDA_2"/>
    <property type="match status" value="1"/>
</dbReference>
<keyword id="KW-0963">Cytoplasm</keyword>
<keyword id="KW-0274">FAD</keyword>
<keyword id="KW-0285">Flavoprotein</keyword>
<keyword id="KW-0520">NAD</keyword>
<keyword id="KW-0819">tRNA processing</keyword>
<protein>
    <recommendedName>
        <fullName evidence="1">tRNA uridine 5-carboxymethylaminomethyl modification enzyme MnmG</fullName>
    </recommendedName>
    <alternativeName>
        <fullName evidence="1">Glucose-inhibited division protein A</fullName>
    </alternativeName>
</protein>
<feature type="chain" id="PRO_1000016635" description="tRNA uridine 5-carboxymethylaminomethyl modification enzyme MnmG">
    <location>
        <begin position="1"/>
        <end position="637"/>
    </location>
</feature>
<feature type="binding site" evidence="1">
    <location>
        <begin position="18"/>
        <end position="23"/>
    </location>
    <ligand>
        <name>FAD</name>
        <dbReference type="ChEBI" id="CHEBI:57692"/>
    </ligand>
</feature>
<feature type="binding site" evidence="1">
    <location>
        <begin position="282"/>
        <end position="296"/>
    </location>
    <ligand>
        <name>NAD(+)</name>
        <dbReference type="ChEBI" id="CHEBI:57540"/>
    </ligand>
</feature>